<sequence>MSKQKKSEIVNRFRKRFDTKMTELGFTYQNIDLYQQAFSHSSFINDFNMNRLDHNERLEFLGDAVLELTVSRYLFDKHPNLPEGNLTKMRATIVCEPSLVIFANKIGLNEMILLGKGEEKTGGRTRPSLISDAFEAFIGALYLDQGLDIVWKFAEKVIFPHVEQNELLGVVDFKTQFQEYVHQQNKGDVTYNLIKEEGPAHHRLFTSEVILQGEAIAEGKGKTKKESEQRAAESAYKQLKQIK</sequence>
<organism>
    <name type="scientific">Staphylococcus aureus (strain Newman)</name>
    <dbReference type="NCBI Taxonomy" id="426430"/>
    <lineage>
        <taxon>Bacteria</taxon>
        <taxon>Bacillati</taxon>
        <taxon>Bacillota</taxon>
        <taxon>Bacilli</taxon>
        <taxon>Bacillales</taxon>
        <taxon>Staphylococcaceae</taxon>
        <taxon>Staphylococcus</taxon>
    </lineage>
</organism>
<name>RNC_STAAE</name>
<comment type="function">
    <text evidence="1">Digests double-stranded RNA. Involved in the processing of primary rRNA transcript to yield the immediate precursors to the large and small rRNAs (23S and 16S). Processes some mRNAs, and tRNAs when they are encoded in the rRNA operon. Processes pre-crRNA and tracrRNA of type II CRISPR loci if present in the organism.</text>
</comment>
<comment type="catalytic activity">
    <reaction evidence="1">
        <text>Endonucleolytic cleavage to 5'-phosphomonoester.</text>
        <dbReference type="EC" id="3.1.26.3"/>
    </reaction>
</comment>
<comment type="cofactor">
    <cofactor evidence="1">
        <name>Mg(2+)</name>
        <dbReference type="ChEBI" id="CHEBI:18420"/>
    </cofactor>
</comment>
<comment type="subunit">
    <text evidence="1">Homodimer.</text>
</comment>
<comment type="subcellular location">
    <subcellularLocation>
        <location evidence="1">Cytoplasm</location>
    </subcellularLocation>
</comment>
<comment type="similarity">
    <text evidence="1">Belongs to the ribonuclease III family.</text>
</comment>
<reference key="1">
    <citation type="journal article" date="2008" name="J. Bacteriol.">
        <title>Genome sequence of Staphylococcus aureus strain Newman and comparative analysis of staphylococcal genomes: polymorphism and evolution of two major pathogenicity islands.</title>
        <authorList>
            <person name="Baba T."/>
            <person name="Bae T."/>
            <person name="Schneewind O."/>
            <person name="Takeuchi F."/>
            <person name="Hiramatsu K."/>
        </authorList>
    </citation>
    <scope>NUCLEOTIDE SEQUENCE [LARGE SCALE GENOMIC DNA]</scope>
    <source>
        <strain>Newman</strain>
    </source>
</reference>
<accession>A6QGD3</accession>
<proteinExistence type="inferred from homology"/>
<keyword id="KW-0963">Cytoplasm</keyword>
<keyword id="KW-0255">Endonuclease</keyword>
<keyword id="KW-0378">Hydrolase</keyword>
<keyword id="KW-0460">Magnesium</keyword>
<keyword id="KW-0479">Metal-binding</keyword>
<keyword id="KW-0507">mRNA processing</keyword>
<keyword id="KW-0540">Nuclease</keyword>
<keyword id="KW-0694">RNA-binding</keyword>
<keyword id="KW-0698">rRNA processing</keyword>
<keyword id="KW-0699">rRNA-binding</keyword>
<keyword id="KW-0819">tRNA processing</keyword>
<feature type="chain" id="PRO_1000075831" description="Ribonuclease 3">
    <location>
        <begin position="1"/>
        <end position="243"/>
    </location>
</feature>
<feature type="domain" description="RNase III" evidence="1">
    <location>
        <begin position="10"/>
        <end position="146"/>
    </location>
</feature>
<feature type="domain" description="DRBM" evidence="1">
    <location>
        <begin position="172"/>
        <end position="241"/>
    </location>
</feature>
<feature type="region of interest" description="Disordered" evidence="2">
    <location>
        <begin position="219"/>
        <end position="243"/>
    </location>
</feature>
<feature type="compositionally biased region" description="Basic and acidic residues" evidence="2">
    <location>
        <begin position="219"/>
        <end position="231"/>
    </location>
</feature>
<feature type="active site" evidence="1">
    <location>
        <position position="63"/>
    </location>
</feature>
<feature type="active site" evidence="1">
    <location>
        <position position="135"/>
    </location>
</feature>
<feature type="binding site" evidence="1">
    <location>
        <position position="59"/>
    </location>
    <ligand>
        <name>Mg(2+)</name>
        <dbReference type="ChEBI" id="CHEBI:18420"/>
    </ligand>
</feature>
<feature type="binding site" evidence="1">
    <location>
        <position position="132"/>
    </location>
    <ligand>
        <name>Mg(2+)</name>
        <dbReference type="ChEBI" id="CHEBI:18420"/>
    </ligand>
</feature>
<feature type="binding site" evidence="1">
    <location>
        <position position="135"/>
    </location>
    <ligand>
        <name>Mg(2+)</name>
        <dbReference type="ChEBI" id="CHEBI:18420"/>
    </ligand>
</feature>
<dbReference type="EC" id="3.1.26.3" evidence="1"/>
<dbReference type="EMBL" id="AP009351">
    <property type="protein sequence ID" value="BAF67415.1"/>
    <property type="molecule type" value="Genomic_DNA"/>
</dbReference>
<dbReference type="RefSeq" id="WP_000043237.1">
    <property type="nucleotide sequence ID" value="NZ_JBBIAE010000001.1"/>
</dbReference>
<dbReference type="SMR" id="A6QGD3"/>
<dbReference type="KEGG" id="sae:NWMN_1143"/>
<dbReference type="HOGENOM" id="CLU_000907_1_3_9"/>
<dbReference type="Proteomes" id="UP000006386">
    <property type="component" value="Chromosome"/>
</dbReference>
<dbReference type="GO" id="GO:0005737">
    <property type="term" value="C:cytoplasm"/>
    <property type="evidence" value="ECO:0007669"/>
    <property type="project" value="UniProtKB-SubCell"/>
</dbReference>
<dbReference type="GO" id="GO:0003725">
    <property type="term" value="F:double-stranded RNA binding"/>
    <property type="evidence" value="ECO:0007669"/>
    <property type="project" value="TreeGrafter"/>
</dbReference>
<dbReference type="GO" id="GO:0046872">
    <property type="term" value="F:metal ion binding"/>
    <property type="evidence" value="ECO:0007669"/>
    <property type="project" value="UniProtKB-KW"/>
</dbReference>
<dbReference type="GO" id="GO:0004525">
    <property type="term" value="F:ribonuclease III activity"/>
    <property type="evidence" value="ECO:0007669"/>
    <property type="project" value="UniProtKB-UniRule"/>
</dbReference>
<dbReference type="GO" id="GO:0019843">
    <property type="term" value="F:rRNA binding"/>
    <property type="evidence" value="ECO:0007669"/>
    <property type="project" value="UniProtKB-KW"/>
</dbReference>
<dbReference type="GO" id="GO:0006397">
    <property type="term" value="P:mRNA processing"/>
    <property type="evidence" value="ECO:0007669"/>
    <property type="project" value="UniProtKB-UniRule"/>
</dbReference>
<dbReference type="GO" id="GO:0010468">
    <property type="term" value="P:regulation of gene expression"/>
    <property type="evidence" value="ECO:0007669"/>
    <property type="project" value="TreeGrafter"/>
</dbReference>
<dbReference type="GO" id="GO:0006364">
    <property type="term" value="P:rRNA processing"/>
    <property type="evidence" value="ECO:0007669"/>
    <property type="project" value="UniProtKB-UniRule"/>
</dbReference>
<dbReference type="GO" id="GO:0008033">
    <property type="term" value="P:tRNA processing"/>
    <property type="evidence" value="ECO:0007669"/>
    <property type="project" value="UniProtKB-KW"/>
</dbReference>
<dbReference type="CDD" id="cd10845">
    <property type="entry name" value="DSRM_RNAse_III_family"/>
    <property type="match status" value="1"/>
</dbReference>
<dbReference type="CDD" id="cd00593">
    <property type="entry name" value="RIBOc"/>
    <property type="match status" value="1"/>
</dbReference>
<dbReference type="FunFam" id="1.10.1520.10:FF:000001">
    <property type="entry name" value="Ribonuclease 3"/>
    <property type="match status" value="1"/>
</dbReference>
<dbReference type="FunFam" id="3.30.160.20:FF:000003">
    <property type="entry name" value="Ribonuclease 3"/>
    <property type="match status" value="1"/>
</dbReference>
<dbReference type="Gene3D" id="3.30.160.20">
    <property type="match status" value="1"/>
</dbReference>
<dbReference type="Gene3D" id="1.10.1520.10">
    <property type="entry name" value="Ribonuclease III domain"/>
    <property type="match status" value="1"/>
</dbReference>
<dbReference type="HAMAP" id="MF_00104">
    <property type="entry name" value="RNase_III"/>
    <property type="match status" value="1"/>
</dbReference>
<dbReference type="InterPro" id="IPR014720">
    <property type="entry name" value="dsRBD_dom"/>
</dbReference>
<dbReference type="InterPro" id="IPR011907">
    <property type="entry name" value="RNase_III"/>
</dbReference>
<dbReference type="InterPro" id="IPR000999">
    <property type="entry name" value="RNase_III_dom"/>
</dbReference>
<dbReference type="InterPro" id="IPR036389">
    <property type="entry name" value="RNase_III_sf"/>
</dbReference>
<dbReference type="NCBIfam" id="TIGR02191">
    <property type="entry name" value="RNaseIII"/>
    <property type="match status" value="1"/>
</dbReference>
<dbReference type="PANTHER" id="PTHR11207:SF0">
    <property type="entry name" value="RIBONUCLEASE 3"/>
    <property type="match status" value="1"/>
</dbReference>
<dbReference type="PANTHER" id="PTHR11207">
    <property type="entry name" value="RIBONUCLEASE III"/>
    <property type="match status" value="1"/>
</dbReference>
<dbReference type="Pfam" id="PF00035">
    <property type="entry name" value="dsrm"/>
    <property type="match status" value="1"/>
</dbReference>
<dbReference type="Pfam" id="PF14622">
    <property type="entry name" value="Ribonucleas_3_3"/>
    <property type="match status" value="1"/>
</dbReference>
<dbReference type="SMART" id="SM00358">
    <property type="entry name" value="DSRM"/>
    <property type="match status" value="1"/>
</dbReference>
<dbReference type="SMART" id="SM00535">
    <property type="entry name" value="RIBOc"/>
    <property type="match status" value="1"/>
</dbReference>
<dbReference type="SUPFAM" id="SSF54768">
    <property type="entry name" value="dsRNA-binding domain-like"/>
    <property type="match status" value="1"/>
</dbReference>
<dbReference type="SUPFAM" id="SSF69065">
    <property type="entry name" value="RNase III domain-like"/>
    <property type="match status" value="1"/>
</dbReference>
<dbReference type="PROSITE" id="PS50137">
    <property type="entry name" value="DS_RBD"/>
    <property type="match status" value="1"/>
</dbReference>
<dbReference type="PROSITE" id="PS00517">
    <property type="entry name" value="RNASE_3_1"/>
    <property type="match status" value="1"/>
</dbReference>
<dbReference type="PROSITE" id="PS50142">
    <property type="entry name" value="RNASE_3_2"/>
    <property type="match status" value="1"/>
</dbReference>
<gene>
    <name evidence="1" type="primary">rnc</name>
    <name type="ordered locus">NWMN_1143</name>
</gene>
<protein>
    <recommendedName>
        <fullName evidence="1">Ribonuclease 3</fullName>
        <ecNumber evidence="1">3.1.26.3</ecNumber>
    </recommendedName>
    <alternativeName>
        <fullName evidence="1">Ribonuclease III</fullName>
        <shortName evidence="1">RNase III</shortName>
    </alternativeName>
</protein>
<evidence type="ECO:0000255" key="1">
    <source>
        <dbReference type="HAMAP-Rule" id="MF_00104"/>
    </source>
</evidence>
<evidence type="ECO:0000256" key="2">
    <source>
        <dbReference type="SAM" id="MobiDB-lite"/>
    </source>
</evidence>